<sequence length="357" mass="41289">MEQKQRRFTKNIFVLDANGKTLCGRIAKLSSQPYCQIKIGRVIAFKPVKNPEPKGYVLNVPGPGAYRIQDGQDIISLMLTPHGVEATTERWEEWKFEGVSVTPMATRVQHNGVMVDAEIKYCKGMGIVQPYMRNDFDRNEMPDLPGVMRSNYDVRELRQKIQNERESAPRLQVQSVSPREESRWMDDDEAKVDEEAKEMIPGPSRLKKLREARSNVFKEVEAEINWNLDEKDEEDRDEREDEEQVKTLSDDDEQGEDASDDEHPKTHITKEYIEKVAKQIKLKDERFMSLSSAMPPASGGFDRMIVTKKLKWQNVPLYCFDESSKRYELQCVGACERVAFVSKDMSLIILRSAFRRL</sequence>
<organismHost>
    <name type="scientific">Antilocapra americana</name>
    <name type="common">Pronghorn</name>
    <dbReference type="NCBI Taxonomy" id="9891"/>
</organismHost>
<organismHost>
    <name type="scientific">Bos taurus</name>
    <name type="common">Bovine</name>
    <dbReference type="NCBI Taxonomy" id="9913"/>
</organismHost>
<organismHost>
    <name type="scientific">Capra hircus</name>
    <name type="common">Goat</name>
    <dbReference type="NCBI Taxonomy" id="9925"/>
</organismHost>
<organismHost>
    <name type="scientific">Culicoides variipennis</name>
    <name type="common">Biting midge</name>
    <dbReference type="NCBI Taxonomy" id="46212"/>
</organismHost>
<organismHost>
    <name type="scientific">Ovis aries</name>
    <name type="common">Sheep</name>
    <dbReference type="NCBI Taxonomy" id="9940"/>
</organismHost>
<accession>P32932</accession>
<proteinExistence type="inferred from homology"/>
<dbReference type="EMBL" id="X58064">
    <property type="protein sequence ID" value="CAA41095.1"/>
    <property type="molecule type" value="Unassigned_RNA"/>
</dbReference>
<dbReference type="PIR" id="JC1256">
    <property type="entry name" value="JC1256"/>
</dbReference>
<dbReference type="SMR" id="P32932"/>
<dbReference type="GO" id="GO:0003723">
    <property type="term" value="F:RNA binding"/>
    <property type="evidence" value="ECO:0007669"/>
    <property type="project" value="UniProtKB-KW"/>
</dbReference>
<dbReference type="InterPro" id="IPR007602">
    <property type="entry name" value="BTV_NS2"/>
</dbReference>
<dbReference type="InterPro" id="IPR037194">
    <property type="entry name" value="NS2_N"/>
</dbReference>
<dbReference type="Pfam" id="PF04514">
    <property type="entry name" value="BTV_NS2"/>
    <property type="match status" value="1"/>
</dbReference>
<dbReference type="SUPFAM" id="SSF110132">
    <property type="entry name" value="BTV NS2-like ssRNA-binding domain"/>
    <property type="match status" value="1"/>
</dbReference>
<name>VNS2_BTV1S</name>
<reference key="1">
    <citation type="journal article" date="1992" name="Gene">
        <title>The complete sequence of genome segment 8 of bluetongue virus, serotype 1, which encodes the nonstructural protein, NS2.</title>
        <authorList>
            <person name="Wade-Evans A.M."/>
        </authorList>
    </citation>
    <scope>NUCLEOTIDE SEQUENCE</scope>
</reference>
<protein>
    <recommendedName>
        <fullName>Non-structural protein NS2</fullName>
    </recommendedName>
</protein>
<feature type="chain" id="PRO_0000222674" description="Non-structural protein NS2">
    <location>
        <begin position="1"/>
        <end position="357"/>
    </location>
</feature>
<feature type="region of interest" description="Disordered" evidence="1">
    <location>
        <begin position="162"/>
        <end position="199"/>
    </location>
</feature>
<feature type="region of interest" description="Disordered" evidence="1">
    <location>
        <begin position="228"/>
        <end position="268"/>
    </location>
</feature>
<feature type="compositionally biased region" description="Acidic residues" evidence="1">
    <location>
        <begin position="230"/>
        <end position="243"/>
    </location>
</feature>
<feature type="compositionally biased region" description="Acidic residues" evidence="1">
    <location>
        <begin position="250"/>
        <end position="260"/>
    </location>
</feature>
<gene>
    <name type="primary">Segment-8</name>
</gene>
<evidence type="ECO:0000256" key="1">
    <source>
        <dbReference type="SAM" id="MobiDB-lite"/>
    </source>
</evidence>
<evidence type="ECO:0000305" key="2"/>
<organism>
    <name type="scientific">Bluetongue virus 1 (isolate South Africa)</name>
    <name type="common">BTV 1</name>
    <dbReference type="NCBI Taxonomy" id="10905"/>
    <lineage>
        <taxon>Viruses</taxon>
        <taxon>Riboviria</taxon>
        <taxon>Orthornavirae</taxon>
        <taxon>Duplornaviricota</taxon>
        <taxon>Resentoviricetes</taxon>
        <taxon>Reovirales</taxon>
        <taxon>Sedoreoviridae</taxon>
        <taxon>Orbivirus</taxon>
        <taxon>Bluetongue virus</taxon>
    </lineage>
</organism>
<comment type="function">
    <text>Single-stranded RNA-binding protein.</text>
</comment>
<comment type="similarity">
    <text evidence="2">Belongs to the orbivirus non-structural protein NS2 family.</text>
</comment>
<keyword id="KW-0694">RNA-binding</keyword>